<comment type="function">
    <text evidence="8 12 13">Class D beta-lactamase which confers resistance to the beta-lactam antibiotics, including penicillins and oxacillin, and moderate resistance to carbapenems such as imipenem; in the DH10B strain of E.coli (PubMed:15616297). Acts via hydrolysis of the beta-lactam ring (PubMed:15616297, PubMed:26459904, PubMed:26701320). Has benzylpenicillin-, oxacillin-, cephalothin- and imipenem-hydrolyzing activities (PubMed:15616297, PubMed:26459904, PubMed:26701320).</text>
</comment>
<comment type="catalytic activity">
    <reaction evidence="8 12 13">
        <text>a beta-lactam + H2O = a substituted beta-amino acid</text>
        <dbReference type="Rhea" id="RHEA:20401"/>
        <dbReference type="ChEBI" id="CHEBI:15377"/>
        <dbReference type="ChEBI" id="CHEBI:35627"/>
        <dbReference type="ChEBI" id="CHEBI:140347"/>
        <dbReference type="EC" id="3.5.2.6"/>
    </reaction>
</comment>
<comment type="activity regulation">
    <text evidence="13">Activated approximately 3-fold by the presence of 0.1M NaHCO3.</text>
</comment>
<comment type="biophysicochemical properties">
    <kinetics>
        <KM evidence="8">50 uM for benzylpenicillin (at pH 7.0 and 30 degrees Celsius)</KM>
        <KM evidence="12">7 uM for benzylpenicillin (at pH 7.0 and 25 degrees Celsius)</KM>
        <KM evidence="8">130 uM for ampicillin (at pH 7.0 and 30 degrees Celsius)</KM>
        <KM evidence="12">21 uM for ampicillin (at pH 7.0 and 25 degrees Celsius)</KM>
        <KM evidence="12">160 uM for carbenicillin (at pH 7.0 and 25 degrees Celsius)</KM>
        <KM evidence="12">22 uM for amoxicillin (at pH 7.0 and 25 degrees Celsius)</KM>
        <KM evidence="8">240 uM for ticarcillin (at pH 7.0 and 30 degrees Celsius)</KM>
        <KM evidence="8">50 uM for piperacillin (at pH 7.0 and 30 degrees Celsius)</KM>
        <KM evidence="8">150 uM for cephalothin (at pH 7.0 and 30 degrees Celsius)</KM>
        <KM evidence="8">200 uM for cefpirome (at pH 7.0 and 30 degrees Celsius)</KM>
        <KM evidence="8">70 uM for oxacillin (at pH 7.0 and 30 degrees Celsius)</KM>
        <KM evidence="12">39 uM for oxacillin (at pH 7.0 and 25 degrees Celsius)</KM>
        <KM evidence="8">7.5 uM for imipenem (at pH 7.0 and 30 degrees Celsius)</KM>
        <KM evidence="12">2.3 uM for imipenem (at pH 7.0 and 25 degrees Celsius)</KM>
        <KM evidence="8">0.075 uM for meropenem (at pH 7.0 and 30 degrees Celsius)</KM>
        <text evidence="8 12">kcat is 5.5 sec(-1) with benzylpenicillin as substrate (at pH 7.0 and 30 degrees Celsius) (PubMed:15616297). kcat is 106 sec(-1) with benzylpenicillin as substrate (at pH 7.0 and 25 degrees Celsius) (PubMed:26459904). kcat is 1 sec(-1) with ampicillin as substrate (at pH 7.0 and 30 degrees Celsius) (PubMed:15616297). kcat is 97 sec(-1) with ampicillin as substrate (at pH 7.0 and 25 degrees Celsius) (PubMed:26459904). kcat is 272 sec(-1) with carbenicillin as substrate (at pH 7.0 and 25 degrees Celsius) (PubMed:26459904). kcat is 62 sec(-1) with amoxicillin as substrate (at pH 7.0 and 25 degrees Celsius) (PubMed:26459904). kcat is 1 sec(-1) with ticarcillin as substrate (at pH 7.0 and 30 degrees Celsius) (PubMed:15616297). kcat is 2.5 sec(-1) with piperacillin as substrate (at pH 7.0 and 30 degrees Celsius) (PubMed:15616297). kcat is 0.1 sec(-1) with cephalothin as substrate (at pH 7.0 and 30 degrees Celsius) (PubMed:15616297). kcat is 200 sec(-1) with cefpirome as substrate (at pH 7.0 and 30 degrees Celsius) (PubMed:15616297). kcat is 70 sec(-1) with oxacillin as substrate (at pH 7.0 and 30 degrees Celsius) (PubMed:15616297). kcat is 137 sec(-1) with oxacillin as substrate (at pH 7.0 and 25 degrees Celsius) (PubMed:26459904). kcat is 0.1 sec(-1) with imipenem as substrate (at pH 7.0 and 30 degrees Celsius) (PubMed:15616297). kcat is 1.2 sec(-1) with imipenem as substrate (at pH 7.0 and 25 degrees Celsius) (PubMed:26459904). kcat is 0.01 sec(-1) with meropenem as substrate (at pH 7.0 and 30 degrees Celsius) (PubMed:15616297).</text>
    </kinetics>
</comment>
<comment type="subunit">
    <text evidence="1 2">Monomer (By similarity). Dimer (By similarity).</text>
</comment>
<comment type="subcellular location">
    <subcellularLocation>
        <location evidence="6">Cell membrane</location>
        <topology evidence="6">Lipid-anchor</topology>
    </subcellularLocation>
</comment>
<comment type="induction">
    <text evidence="9 10">Expressed from an upstream promoter, P(Aba2), in an insertion sequence, ISAba2 (PubMed:16569863). Expression level is positively correlated with gene copy-number in clinical isolates (PubMed:17438042).</text>
</comment>
<comment type="PTM">
    <text evidence="4 11 12 13">Carboxylated on the epsilon-amino group of a lysine, with the resulting carbamate functional group serving as a general base (PubMed:24468777, PubMed:26459904, PubMed:26701320). Probably N-carboxylated at Lys-86 at neutral pH in vivo and undergoes complete N-decarboxylation, at pH 4.1, in vitro (By similarity). N-carboxylation at Lys-86 probably increases catalytic activity under physiological conditions (PubMed:26701320).</text>
</comment>
<comment type="similarity">
    <text evidence="15">Belongs to the class-D beta-lactamase family.</text>
</comment>
<feature type="signal peptide" evidence="6">
    <location>
        <begin position="1"/>
        <end position="18"/>
    </location>
</feature>
<feature type="chain" id="PRO_5015097341" description="Beta-lactamase OXA-58" evidence="6">
    <location>
        <begin position="19"/>
        <end position="280"/>
    </location>
</feature>
<feature type="active site" description="Acyl-ester intermediate" evidence="5 12 54">
    <location>
        <position position="83"/>
    </location>
</feature>
<feature type="binding site" evidence="12 54">
    <location>
        <position position="83"/>
    </location>
    <ligand>
        <name>a beta-lactam</name>
        <dbReference type="ChEBI" id="CHEBI:35627"/>
    </ligand>
</feature>
<feature type="binding site" evidence="1">
    <location>
        <position position="86"/>
    </location>
    <ligand>
        <name>a beta-lactam</name>
        <dbReference type="ChEBI" id="CHEBI:35627"/>
    </ligand>
</feature>
<feature type="binding site" evidence="3">
    <location>
        <position position="130"/>
    </location>
    <ligand>
        <name>a beta-lactam</name>
        <dbReference type="ChEBI" id="CHEBI:35627"/>
    </ligand>
</feature>
<feature type="binding site" evidence="12 54">
    <location>
        <position position="221"/>
    </location>
    <ligand>
        <name>a beta-lactam</name>
        <dbReference type="ChEBI" id="CHEBI:35627"/>
    </ligand>
</feature>
<feature type="binding site" evidence="12 54">
    <location>
        <position position="223"/>
    </location>
    <ligand>
        <name>a beta-lactam</name>
        <dbReference type="ChEBI" id="CHEBI:35627"/>
    </ligand>
</feature>
<feature type="binding site" evidence="12 54">
    <location>
        <position position="263"/>
    </location>
    <ligand>
        <name>a beta-lactam</name>
        <dbReference type="ChEBI" id="CHEBI:35627"/>
    </ligand>
</feature>
<feature type="modified residue" description="N6-carboxylysine" evidence="5 11 12 13 51 52 53 54 55">
    <location>
        <position position="86"/>
    </location>
</feature>
<feature type="lipid moiety-binding region" description="N-palmitoyl cysteine" evidence="6">
    <location>
        <position position="19"/>
    </location>
</feature>
<feature type="lipid moiety-binding region" description="S-diacylglycerol cysteine" evidence="6">
    <location>
        <position position="19"/>
    </location>
</feature>
<feature type="mutagenesis site" description="Reduces catalytic activity about 500-fold with respect to nitrocefin. Slightly reduces thermal stability." evidence="13">
    <original>S</original>
    <variation>A</variation>
    <location>
        <position position="83"/>
    </location>
</feature>
<feature type="mutagenesis site" description="Reduces catalytic efficiency about 30-fold with respect to oxacillin, and about 5-fold with respect to penicillins and imipenem." evidence="12">
    <original>F</original>
    <variation>A</variation>
    <location>
        <position position="113"/>
    </location>
</feature>
<feature type="mutagenesis site" description="Similar catalytic efficiency to wild-type with respect to penicillins, oxacillin and imipenem." evidence="12">
    <original>F</original>
    <variation>Y</variation>
    <location>
        <position position="113"/>
    </location>
</feature>
<feature type="mutagenesis site" description="Reduces catalytic efficiency about 70-fold with respect to oxacillin, but similar catalytic efficiency to wild-type with respect to penicillins and imipenem." evidence="12">
    <original>F</original>
    <variation>A</variation>
    <location>
        <position position="114"/>
    </location>
</feature>
<feature type="mutagenesis site" description="Reduces catalytic efficiency about 300-fold with respect to oxacillin, and about 30-fold with respect to penicillins and imipenem." evidence="12">
    <original>F</original>
    <variation>I</variation>
    <location>
        <position position="114"/>
    </location>
</feature>
<feature type="mutagenesis site" description="Reduces catalytic activity about 5-fold with respect to nitrocefin. Reduces thermal stability." evidence="13">
    <original>W</original>
    <variation>A</variation>
    <location>
        <position position="169"/>
    </location>
</feature>
<feature type="mutagenesis site" description="Similar catalytic efficiency to wild-type with respect to penicillins, oxacillin and imipenem." evidence="12">
    <original>M</original>
    <variation>A</variation>
    <location>
        <position position="225"/>
    </location>
</feature>
<feature type="mutagenesis site" description="Reduces catalytic efficiency about 100-fold with respect to oxacillin, and about 5-fold with respect to penicillins and imipenem." evidence="12">
    <original>M</original>
    <variation>T</variation>
    <location>
        <position position="225"/>
    </location>
</feature>
<feature type="helix" evidence="59">
    <location>
        <begin position="39"/>
        <end position="49"/>
    </location>
</feature>
<feature type="strand" evidence="59">
    <location>
        <begin position="55"/>
        <end position="60"/>
    </location>
</feature>
<feature type="strand" evidence="59">
    <location>
        <begin position="65"/>
        <end position="70"/>
    </location>
</feature>
<feature type="helix" evidence="59">
    <location>
        <begin position="72"/>
        <end position="76"/>
    </location>
</feature>
<feature type="helix" evidence="59">
    <location>
        <begin position="82"/>
        <end position="85"/>
    </location>
</feature>
<feature type="helix" evidence="59">
    <location>
        <begin position="86"/>
        <end position="95"/>
    </location>
</feature>
<feature type="strand" evidence="60">
    <location>
        <begin position="101"/>
        <end position="103"/>
    </location>
</feature>
<feature type="helix" evidence="59">
    <location>
        <begin position="115"/>
        <end position="117"/>
    </location>
</feature>
<feature type="helix" evidence="59">
    <location>
        <begin position="123"/>
        <end position="129"/>
    </location>
</feature>
<feature type="helix" evidence="59">
    <location>
        <begin position="132"/>
        <end position="142"/>
    </location>
</feature>
<feature type="helix" evidence="59">
    <location>
        <begin position="144"/>
        <end position="154"/>
    </location>
</feature>
<feature type="turn" evidence="59">
    <location>
        <begin position="165"/>
        <end position="167"/>
    </location>
</feature>
<feature type="helix" evidence="59">
    <location>
        <begin position="168"/>
        <end position="171"/>
    </location>
</feature>
<feature type="helix" evidence="59">
    <location>
        <begin position="178"/>
        <end position="190"/>
    </location>
</feature>
<feature type="strand" evidence="59">
    <location>
        <begin position="193"/>
        <end position="195"/>
    </location>
</feature>
<feature type="helix" evidence="59">
    <location>
        <begin position="197"/>
        <end position="206"/>
    </location>
</feature>
<feature type="strand" evidence="59">
    <location>
        <begin position="208"/>
        <end position="212"/>
    </location>
</feature>
<feature type="strand" evidence="59">
    <location>
        <begin position="215"/>
        <end position="224"/>
    </location>
</feature>
<feature type="strand" evidence="59">
    <location>
        <begin position="226"/>
        <end position="239"/>
    </location>
</feature>
<feature type="strand" evidence="59">
    <location>
        <begin position="245"/>
        <end position="254"/>
    </location>
</feature>
<feature type="helix" evidence="59">
    <location>
        <begin position="262"/>
        <end position="273"/>
    </location>
</feature>
<geneLocation type="plasmid" evidence="42">
    <name>pA2445</name>
</geneLocation>
<geneLocation type="plasmid" evidence="34">
    <name>pABIR</name>
</geneLocation>
<geneLocation type="plasmid" evidence="36">
    <name>pABNA1</name>
</geneLocation>
<geneLocation type="plasmid" evidence="37">
    <name>pABNA2</name>
</geneLocation>
<geneLocation type="plasmid" evidence="47">
    <name>pAC1633-1</name>
</geneLocation>
<geneLocation type="plasmid" evidence="19">
    <name>pOUR</name>
</geneLocation>
<geneLocation type="plasmid" evidence="40">
    <name>pWA3</name>
</geneLocation>
<geneLocation type="plasmid" evidence="41">
    <name>pWH8144</name>
</geneLocation>
<organism evidence="16">
    <name type="scientific">Acinetobacter baumannii</name>
    <dbReference type="NCBI Taxonomy" id="470"/>
    <lineage>
        <taxon>Bacteria</taxon>
        <taxon>Pseudomonadati</taxon>
        <taxon>Pseudomonadota</taxon>
        <taxon>Gammaproteobacteria</taxon>
        <taxon>Moraxellales</taxon>
        <taxon>Moraxellaceae</taxon>
        <taxon>Acinetobacter</taxon>
        <taxon>Acinetobacter calcoaceticus/baumannii complex</taxon>
    </lineage>
</organism>
<sequence length="280" mass="31420">MKLLKILSLVCLSISIGACAEHSMSRAKTSTIPQVNNSIIDQNVQALFNEISADAVFVTYDGQNIKKYGTHLDRAKTAYIPASTFKIANALIGLENHKATSTEIFKWDGKPRFFKAWDKDFTLGEAMQASTVPVYQELARRIGPSLMQSELQRIGYGNMQIGTEVDQFWLKGPLTITPIQEVKFVYDLAQGQLPFKPEVQQQVKEMLYVERRGENRLYAKSGWGMAVDPQVGWYVGFVEKADGQVVAFALNMQMKAGDDIALRKQLSLDVLDKLGVFHYL</sequence>
<gene>
    <name evidence="14" type="primary">OXA-58</name>
    <name evidence="21" type="synonym">bla-oxa-58</name>
    <name evidence="20" type="synonym">bla-oxa58</name>
    <name evidence="16" type="synonym">blaOXA-58</name>
    <name evidence="48" type="ORF">EKS29_04300</name>
    <name evidence="46" type="ORF">GSE42_20550</name>
    <name evidence="47" type="ORF">H0529_21805</name>
    <name evidence="45" type="ORF">P9867_019230</name>
    <name evidence="44" type="ORF">P9867_20895</name>
</gene>
<proteinExistence type="evidence at protein level"/>
<dbReference type="EC" id="3.5.2.6" evidence="7 8 12 13"/>
<dbReference type="EMBL" id="AY665723">
    <property type="protein sequence ID" value="AAW57529.1"/>
    <property type="molecule type" value="Genomic_DNA"/>
</dbReference>
<dbReference type="EMBL" id="DQ385607">
    <property type="protein sequence ID" value="ABD47674.1"/>
    <property type="molecule type" value="Genomic_DNA"/>
</dbReference>
<dbReference type="EMBL" id="DQ987830">
    <property type="protein sequence ID" value="ABJ91191.1"/>
    <property type="molecule type" value="Genomic_DNA"/>
</dbReference>
<dbReference type="EMBL" id="EF138630">
    <property type="protein sequence ID" value="ABQ23503.1"/>
    <property type="molecule type" value="Genomic_DNA"/>
</dbReference>
<dbReference type="EMBL" id="EF138630">
    <property type="protein sequence ID" value="ABQ23507.1"/>
    <property type="molecule type" value="Genomic_DNA"/>
</dbReference>
<dbReference type="EMBL" id="EF138631">
    <property type="protein sequence ID" value="ABQ23512.2"/>
    <property type="molecule type" value="Genomic_DNA"/>
</dbReference>
<dbReference type="EMBL" id="EU107364">
    <property type="protein sequence ID" value="ABU97485.1"/>
    <property type="molecule type" value="Genomic_DNA"/>
</dbReference>
<dbReference type="EMBL" id="EU107365">
    <property type="protein sequence ID" value="ABU97486.1"/>
    <property type="molecule type" value="Genomic_DNA"/>
</dbReference>
<dbReference type="EMBL" id="EU107366">
    <property type="protein sequence ID" value="ABU97487.1"/>
    <property type="molecule type" value="Genomic_DNA"/>
</dbReference>
<dbReference type="EMBL" id="EU107367">
    <property type="protein sequence ID" value="ABU97488.1"/>
    <property type="molecule type" value="Genomic_DNA"/>
</dbReference>
<dbReference type="EMBL" id="EU107368">
    <property type="protein sequence ID" value="ABU97489.1"/>
    <property type="molecule type" value="Genomic_DNA"/>
</dbReference>
<dbReference type="EMBL" id="EU107369">
    <property type="protein sequence ID" value="ABU97490.1"/>
    <property type="molecule type" value="Genomic_DNA"/>
</dbReference>
<dbReference type="EMBL" id="EU107370">
    <property type="protein sequence ID" value="ABU97491.1"/>
    <property type="molecule type" value="Genomic_DNA"/>
</dbReference>
<dbReference type="EMBL" id="EU107371">
    <property type="protein sequence ID" value="ABU97492.1"/>
    <property type="molecule type" value="Genomic_DNA"/>
</dbReference>
<dbReference type="EMBL" id="EU107372">
    <property type="protein sequence ID" value="ABU97493.1"/>
    <property type="molecule type" value="Genomic_DNA"/>
</dbReference>
<dbReference type="EMBL" id="EU107373">
    <property type="protein sequence ID" value="ABU97494.1"/>
    <property type="molecule type" value="Genomic_DNA"/>
</dbReference>
<dbReference type="EMBL" id="EU107374">
    <property type="protein sequence ID" value="ABU97495.1"/>
    <property type="molecule type" value="Genomic_DNA"/>
</dbReference>
<dbReference type="EMBL" id="EU107375">
    <property type="protein sequence ID" value="ABU97496.1"/>
    <property type="molecule type" value="Genomic_DNA"/>
</dbReference>
<dbReference type="EMBL" id="EU107376">
    <property type="protein sequence ID" value="ABU97497.1"/>
    <property type="molecule type" value="Genomic_DNA"/>
</dbReference>
<dbReference type="EMBL" id="EU294228">
    <property type="protein sequence ID" value="ACB05799.1"/>
    <property type="molecule type" value="Genomic_DNA"/>
</dbReference>
<dbReference type="EMBL" id="FJ492877">
    <property type="protein sequence ID" value="ACL27893.1"/>
    <property type="molecule type" value="Genomic_DNA"/>
</dbReference>
<dbReference type="EMBL" id="GQ338082">
    <property type="protein sequence ID" value="ACT98250.1"/>
    <property type="molecule type" value="Genomic_DNA"/>
</dbReference>
<dbReference type="EMBL" id="GQ338083">
    <property type="protein sequence ID" value="ACT98258.1"/>
    <property type="molecule type" value="Genomic_DNA"/>
</dbReference>
<dbReference type="EMBL" id="HQ005471">
    <property type="protein sequence ID" value="ADM33943.1"/>
    <property type="molecule type" value="Genomic_DNA"/>
</dbReference>
<dbReference type="EMBL" id="HQ219687">
    <property type="protein sequence ID" value="ADQ27319.1"/>
    <property type="molecule type" value="Genomic_DNA"/>
</dbReference>
<dbReference type="EMBL" id="JQ241791">
    <property type="protein sequence ID" value="AFF18250.1"/>
    <property type="molecule type" value="Genomic_DNA"/>
</dbReference>
<dbReference type="EMBL" id="JQ241792">
    <property type="protein sequence ID" value="AFH57370.1"/>
    <property type="molecule type" value="Genomic_DNA"/>
</dbReference>
<dbReference type="EMBL" id="JX968506">
    <property type="protein sequence ID" value="AGC51039.1"/>
    <property type="molecule type" value="Genomic_DNA"/>
</dbReference>
<dbReference type="EMBL" id="KY660721">
    <property type="protein sequence ID" value="ASF83214.1"/>
    <property type="molecule type" value="Genomic_DNA"/>
</dbReference>
<dbReference type="EMBL" id="JARTMM010000211">
    <property type="protein sequence ID" value="MDK4883960.1"/>
    <property type="molecule type" value="Genomic_DNA"/>
</dbReference>
<dbReference type="EMBL" id="JARTMM020000002">
    <property type="protein sequence ID" value="MEC5498499.1"/>
    <property type="molecule type" value="Genomic_DNA"/>
</dbReference>
<dbReference type="EMBL" id="WWCH01000018">
    <property type="protein sequence ID" value="MYM80302.1"/>
    <property type="molecule type" value="Genomic_DNA"/>
</dbReference>
<dbReference type="EMBL" id="CP059301">
    <property type="protein sequence ID" value="QOJ62286.1"/>
    <property type="molecule type" value="Genomic_DNA"/>
</dbReference>
<dbReference type="EMBL" id="RXYO01000024">
    <property type="protein sequence ID" value="RTY12892.1"/>
    <property type="molecule type" value="Genomic_DNA"/>
</dbReference>
<dbReference type="RefSeq" id="YP_001736307.1">
    <property type="nucleotide sequence ID" value="NC_010481.1"/>
</dbReference>
<dbReference type="PDB" id="4OH0">
    <property type="method" value="X-ray"/>
    <property type="resolution" value="1.30 A"/>
    <property type="chains" value="A=1-280"/>
</dbReference>
<dbReference type="PDB" id="4Y0O">
    <property type="method" value="X-ray"/>
    <property type="resolution" value="2.37 A"/>
    <property type="chains" value="A=1-280"/>
</dbReference>
<dbReference type="PDB" id="4Y0T">
    <property type="method" value="X-ray"/>
    <property type="resolution" value="2.30 A"/>
    <property type="chains" value="A/B/C/D=1-280"/>
</dbReference>
<dbReference type="PDB" id="4Y0U">
    <property type="method" value="X-ray"/>
    <property type="resolution" value="2.60 A"/>
    <property type="chains" value="A/B/C/D=1-280"/>
</dbReference>
<dbReference type="PDB" id="5BOH">
    <property type="method" value="X-ray"/>
    <property type="resolution" value="1.80 A"/>
    <property type="chains" value="A=44-280"/>
</dbReference>
<dbReference type="PDB" id="7VVI">
    <property type="method" value="X-ray"/>
    <property type="resolution" value="1.40 A"/>
    <property type="chains" value="A=44-280"/>
</dbReference>
<dbReference type="PDB" id="7VX3">
    <property type="method" value="X-ray"/>
    <property type="resolution" value="1.80 A"/>
    <property type="chains" value="A=1-280"/>
</dbReference>
<dbReference type="PDB" id="7VX6">
    <property type="method" value="X-ray"/>
    <property type="resolution" value="1.70 A"/>
    <property type="chains" value="A=1-280"/>
</dbReference>
<dbReference type="PDB" id="9D78">
    <property type="method" value="X-ray"/>
    <property type="resolution" value="1.90 A"/>
    <property type="chains" value="A/B/C/D=36-280"/>
</dbReference>
<dbReference type="PDB" id="9D79">
    <property type="method" value="X-ray"/>
    <property type="resolution" value="1.90 A"/>
    <property type="chains" value="A/B/C/D=1-280"/>
</dbReference>
<dbReference type="PDB" id="9D7A">
    <property type="method" value="X-ray"/>
    <property type="resolution" value="2.05 A"/>
    <property type="chains" value="A/B/C/D=1-280"/>
</dbReference>
<dbReference type="PDB" id="9D7B">
    <property type="method" value="X-ray"/>
    <property type="resolution" value="1.99 A"/>
    <property type="chains" value="A/B/C/D=1-280"/>
</dbReference>
<dbReference type="PDB" id="9D7C">
    <property type="method" value="X-ray"/>
    <property type="resolution" value="1.94 A"/>
    <property type="chains" value="A/B/C/D=1-280"/>
</dbReference>
<dbReference type="PDB" id="9D7D">
    <property type="method" value="X-ray"/>
    <property type="resolution" value="2.05 A"/>
    <property type="chains" value="A/B/C/D=1-280"/>
</dbReference>
<dbReference type="PDB" id="9D8C">
    <property type="method" value="X-ray"/>
    <property type="resolution" value="2.15 A"/>
    <property type="chains" value="A/B/C/D=1-280"/>
</dbReference>
<dbReference type="PDBsum" id="4OH0"/>
<dbReference type="PDBsum" id="4Y0O"/>
<dbReference type="PDBsum" id="4Y0T"/>
<dbReference type="PDBsum" id="4Y0U"/>
<dbReference type="PDBsum" id="5BOH"/>
<dbReference type="PDBsum" id="7VVI"/>
<dbReference type="PDBsum" id="7VX3"/>
<dbReference type="PDBsum" id="7VX6"/>
<dbReference type="PDBsum" id="9D78"/>
<dbReference type="PDBsum" id="9D79"/>
<dbReference type="PDBsum" id="9D7A"/>
<dbReference type="PDBsum" id="9D7B"/>
<dbReference type="PDBsum" id="9D7C"/>
<dbReference type="PDBsum" id="9D7D"/>
<dbReference type="PDBsum" id="9D8C"/>
<dbReference type="SMR" id="Q2TR58"/>
<dbReference type="ChEMBL" id="CHEMBL5153"/>
<dbReference type="CARD" id="ARO:3001611">
    <property type="molecule name" value="OXA-58"/>
    <property type="mechanism identifier" value="ARO:0001004"/>
    <property type="mechanism name" value="antibiotic inactivation"/>
</dbReference>
<dbReference type="KEGG" id="ag:AAW57529"/>
<dbReference type="Proteomes" id="UP000480763">
    <property type="component" value="Unassembled WGS sequence"/>
</dbReference>
<dbReference type="Proteomes" id="UP001174156">
    <property type="component" value="Unassembled WGS sequence"/>
</dbReference>
<dbReference type="GO" id="GO:0005886">
    <property type="term" value="C:plasma membrane"/>
    <property type="evidence" value="ECO:0007669"/>
    <property type="project" value="UniProtKB-SubCell"/>
</dbReference>
<dbReference type="GO" id="GO:0008800">
    <property type="term" value="F:beta-lactamase activity"/>
    <property type="evidence" value="ECO:0007669"/>
    <property type="project" value="UniProtKB-EC"/>
</dbReference>
<dbReference type="GO" id="GO:0008658">
    <property type="term" value="F:penicillin binding"/>
    <property type="evidence" value="ECO:0007669"/>
    <property type="project" value="InterPro"/>
</dbReference>
<dbReference type="GO" id="GO:0017001">
    <property type="term" value="P:antibiotic catabolic process"/>
    <property type="evidence" value="ECO:0007669"/>
    <property type="project" value="InterPro"/>
</dbReference>
<dbReference type="GO" id="GO:0071555">
    <property type="term" value="P:cell wall organization"/>
    <property type="evidence" value="ECO:0007669"/>
    <property type="project" value="TreeGrafter"/>
</dbReference>
<dbReference type="GO" id="GO:0046677">
    <property type="term" value="P:response to antibiotic"/>
    <property type="evidence" value="ECO:0007669"/>
    <property type="project" value="UniProtKB-KW"/>
</dbReference>
<dbReference type="Gene3D" id="3.40.710.10">
    <property type="entry name" value="DD-peptidase/beta-lactamase superfamily"/>
    <property type="match status" value="1"/>
</dbReference>
<dbReference type="InterPro" id="IPR050515">
    <property type="entry name" value="Bact_Transpept/Beta-Lactamase"/>
</dbReference>
<dbReference type="InterPro" id="IPR012338">
    <property type="entry name" value="Beta-lactam/transpept-like"/>
</dbReference>
<dbReference type="InterPro" id="IPR002137">
    <property type="entry name" value="Beta-lactam_class-D_AS"/>
</dbReference>
<dbReference type="InterPro" id="IPR001460">
    <property type="entry name" value="PCN-bd_Tpept"/>
</dbReference>
<dbReference type="NCBIfam" id="NF012161">
    <property type="entry name" value="bla_class_D_main"/>
    <property type="match status" value="1"/>
</dbReference>
<dbReference type="NCBIfam" id="NF000500">
    <property type="entry name" value="blaOXA-58_like"/>
    <property type="match status" value="1"/>
</dbReference>
<dbReference type="PANTHER" id="PTHR30627:SF6">
    <property type="entry name" value="BETA-LACTAMASE YBXI-RELATED"/>
    <property type="match status" value="1"/>
</dbReference>
<dbReference type="PANTHER" id="PTHR30627">
    <property type="entry name" value="PEPTIDOGLYCAN D,D-TRANSPEPTIDASE"/>
    <property type="match status" value="1"/>
</dbReference>
<dbReference type="Pfam" id="PF00905">
    <property type="entry name" value="Transpeptidase"/>
    <property type="match status" value="1"/>
</dbReference>
<dbReference type="SUPFAM" id="SSF56601">
    <property type="entry name" value="beta-lactamase/transpeptidase-like"/>
    <property type="match status" value="1"/>
</dbReference>
<dbReference type="PROSITE" id="PS00337">
    <property type="entry name" value="BETA_LACTAMASE_D"/>
    <property type="match status" value="1"/>
</dbReference>
<dbReference type="PROSITE" id="PS51257">
    <property type="entry name" value="PROKAR_LIPOPROTEIN"/>
    <property type="match status" value="1"/>
</dbReference>
<reference evidence="16" key="1">
    <citation type="journal article" date="2004" name="Antimicrob. Agents Chemother.">
        <title>OXA-60, a chromosomal, inducible, and imipenem-hydrolyzing class D beta-lactamase from Ralstonia pickettii.</title>
        <authorList>
            <person name="Girlich D."/>
            <person name="Naas T."/>
            <person name="Nordmann P."/>
        </authorList>
    </citation>
    <scope>NUCLEOTIDE SEQUENCE [GENOMIC DNA]</scope>
    <source>
        <strain evidence="16">MAD</strain>
    </source>
</reference>
<reference evidence="16" key="2">
    <citation type="journal article" date="2005" name="Antimicrob. Agents Chemother.">
        <title>OXA-58, a novel class D {beta}-lactamase involved in resistance to carbapenems in Acinetobacter baumannii.</title>
        <authorList>
            <person name="Poirel L."/>
            <person name="Marque S."/>
            <person name="Heritier C."/>
            <person name="Segonds C."/>
            <person name="Chabanon G."/>
            <person name="Nordmann P."/>
        </authorList>
    </citation>
    <scope>NUCLEOTIDE SEQUENCE [GENOMIC DNA]</scope>
    <scope>FUNCTION</scope>
    <scope>CATALYTIC ACTIVITY</scope>
    <scope>BIOPHYSICOCHEMICAL PROPERTIES</scope>
    <source>
        <strain evidence="16">MAD</strain>
    </source>
</reference>
<reference evidence="16" key="3">
    <citation type="journal article" date="2006" name="Antimicrob. Agents Chemother.">
        <title>Genetic structures at the origin of acquisition and expression of the carbapenem-hydrolyzing oxacillinase gene blaOXA-58 in Acinetobacter baumannii.</title>
        <authorList>
            <person name="Poirel L."/>
            <person name="Nordmann P."/>
        </authorList>
    </citation>
    <scope>NUCLEOTIDE SEQUENCE [GENOMIC DNA]</scope>
    <scope>INDUCTION</scope>
    <source>
        <strain evidence="16">MAD</strain>
    </source>
</reference>
<reference evidence="17" key="4">
    <citation type="journal article" date="2006" name="Antimicrob. Agents Chemother.">
        <title>Emergence of PER-2 and VEB-1a in Acinetobacter baumannii Strains in the Americas.</title>
        <authorList>
            <person name="Pasteran F."/>
            <person name="Rapoport M."/>
            <person name="Petroni A."/>
            <person name="Faccone D."/>
            <person name="Corso A."/>
            <person name="Galas M."/>
            <person name="Vazquez M."/>
            <person name="Procopio A."/>
            <person name="Tokumoto M."/>
            <person name="Cagnoni V."/>
        </authorList>
    </citation>
    <scope>NUCLEOTIDE SEQUENCE [GENOMIC DNA]</scope>
    <source>
        <strain evidence="17">FAV-1</strain>
    </source>
</reference>
<reference evidence="18" key="5">
    <citation type="submission" date="2006-09" db="EMBL/GenBank/DDBJ databases">
        <title>Molecular surveillance of enzymatic carbapenem resistance in Acinetobacter baumannii isolates reveals the polyclonal spread of blaOXA-23 and blaOXA-58 in several hospitals from Argentina.</title>
        <authorList>
            <person name="Merkier A.K."/>
            <person name="Catalano M."/>
            <person name="Ramirez M.S."/>
            <person name="Quiroga C."/>
            <person name="Orman B."/>
            <person name="Ratier L."/>
            <person name="Famiglietti A."/>
            <person name="Vay C."/>
            <person name="Di Martino A."/>
            <person name="Centron D."/>
        </authorList>
    </citation>
    <scope>NUCLEOTIDE SEQUENCE [GENOMIC DNA]</scope>
    <source>
        <strain evidence="18">311</strain>
    </source>
</reference>
<reference evidence="19" key="6">
    <citation type="journal article" date="2007" name="Antimicrob. Agents Chemother.">
        <title>Multicopy blaOXA-58 gene as a source of high-level resistance to carbapenems in Acinetobacter baumannii.</title>
        <authorList>
            <person name="Bertini A."/>
            <person name="Poirel L."/>
            <person name="Bernabeu S."/>
            <person name="Fortini D."/>
            <person name="Villa L."/>
            <person name="Nordmann P."/>
            <person name="Carattoli A."/>
        </authorList>
    </citation>
    <scope>NUCLEOTIDE SEQUENCE [GENOMIC DNA]</scope>
    <scope>INDUCTION</scope>
    <source>
        <strain evidence="20">183</strain>
        <strain evidence="19">186</strain>
        <plasmid evidence="19">pOUR</plasmid>
    </source>
</reference>
<reference evidence="21" key="7">
    <citation type="submission" date="2007-08" db="EMBL/GenBank/DDBJ databases">
        <title>Detection and characterization of oxa structure in clinical isolates of Acinetobacter spp. in Shenzhen, China.</title>
        <authorList>
            <person name="Xu X."/>
            <person name="Kong F."/>
        </authorList>
    </citation>
    <scope>NUCLEOTIDE SEQUENCE [GENOMIC DNA]</scope>
    <source>
        <strain evidence="26">508151</strain>
        <strain evidence="29">508374</strain>
        <strain evidence="24">512140</strain>
        <strain evidence="28">601984</strain>
        <strain evidence="23">604588</strain>
        <strain evidence="30">606083</strain>
        <strain evidence="27">606543</strain>
        <strain evidence="32">607336</strain>
        <strain evidence="33">608561</strain>
        <strain evidence="31">609013</strain>
        <strain evidence="22">609093</strain>
        <strain evidence="25">609904</strain>
        <strain evidence="21">9128</strain>
    </source>
</reference>
<reference evidence="34" key="8">
    <citation type="journal article" date="2008" name="Antimicrob. Agents Chemother.">
        <title>A plasmid-borne blaOXA-58 gene confers imipenem resistance to Acinetobacter baumannii isolates from a Lebanese hospital.</title>
        <authorList>
            <person name="Zarrilli R."/>
            <person name="Vitale D."/>
            <person name="Di Popolo A."/>
            <person name="Bagattini M."/>
            <person name="Daoud Z."/>
            <person name="Khan A.U."/>
            <person name="Afif C."/>
            <person name="Triassi M."/>
        </authorList>
    </citation>
    <scope>NUCLEOTIDE SEQUENCE [GENOMIC DNA]</scope>
    <source>
        <strain evidence="34">Transconjugant 1</strain>
        <plasmid evidence="34">pABIR</plasmid>
    </source>
</reference>
<reference evidence="20" key="9">
    <citation type="submission" date="2008-01" db="EMBL/GenBank/DDBJ databases">
        <authorList>
            <person name="Carattoli A."/>
        </authorList>
    </citation>
    <scope>NUCLEOTIDE SEQUENCE [GENOMIC DNA]</scope>
    <source>
        <strain evidence="20">183</strain>
        <plasmid evidence="20">pOUR</plasmid>
    </source>
</reference>
<reference evidence="35" key="10">
    <citation type="submission" date="2008-11" db="EMBL/GenBank/DDBJ databases">
        <title>Distribution of blaOXA genes and insertion sequence elements ISAba1, ISAba2, and ISAba3 among Acinetobacter spp. isolated from Brazilian hospitals.</title>
        <authorList>
            <person name="Antonio C.S."/>
            <person name="Cavina F.C."/>
            <person name="Mamizuka E.M."/>
            <person name="Lincopan N."/>
        </authorList>
    </citation>
    <scope>NUCLEOTIDE SEQUENCE [GENOMIC DNA]</scope>
    <source>
        <strain evidence="35">AC5/06</strain>
    </source>
</reference>
<reference evidence="36" key="11">
    <citation type="journal article" date="2010" name="J. Clin. Microbiol.">
        <title>Molecular epidemiology of multidrug-resistant Acinetobacter baumannii in a tertiary care hospital in Naples, Italy, shows the emergence of a novel epidemic clone.</title>
        <authorList>
            <person name="Giannouli M."/>
            <person name="Cuccurullo S."/>
            <person name="Crivaro V."/>
            <person name="Di Popolo A."/>
            <person name="Bernardo M."/>
            <person name="Tomasone F."/>
            <person name="Amato G."/>
            <person name="Brisse S."/>
            <person name="Triassi M."/>
            <person name="Utili R."/>
            <person name="Zarrilli R."/>
        </authorList>
    </citation>
    <scope>NUCLEOTIDE SEQUENCE [GENOMIC DNA]</scope>
    <source>
        <strain evidence="37">3957</strain>
        <strain evidence="36">3979</strain>
        <plasmid evidence="36">pABNA1</plasmid>
        <plasmid evidence="37">pABNA2</plasmid>
    </source>
</reference>
<reference evidence="39" key="12">
    <citation type="submission" date="2010-09" db="EMBL/GenBank/DDBJ databases">
        <title>High prevalence of blaOXA-58 and blaOXA-23 genes involved in resistance to carbapenems in Acinetobacter baumannii at a teaching hospital in Southern China through 2002 to 2009.</title>
        <authorList>
            <person name="Wu W."/>
            <person name="Lu J."/>
            <person name="Wang H."/>
            <person name="Lu Y."/>
            <person name="Wu J."/>
            <person name="Li W."/>
            <person name="Wu W."/>
        </authorList>
    </citation>
    <scope>NUCLEOTIDE SEQUENCE [GENOMIC DNA]</scope>
    <source>
        <strain evidence="39">2ns11</strain>
        <strain evidence="38">9ns66</strain>
    </source>
</reference>
<reference evidence="42" key="13">
    <citation type="submission" date="2012-10" db="EMBL/GenBank/DDBJ databases">
        <title>Carbapenem-hydrolyzing Class D beta-lactamases in Acinetobacter spp., China.</title>
        <authorList>
            <person name="Chen Y."/>
            <person name="Ruan Z."/>
            <person name="Fu Y."/>
            <person name="Shu J."/>
            <person name="Wang H."/>
            <person name="Yu Y."/>
        </authorList>
    </citation>
    <scope>NUCLEOTIDE SEQUENCE [GENOMIC DNA]</scope>
    <source>
        <strain evidence="42">A2445</strain>
        <plasmid evidence="42">pA2445</plasmid>
    </source>
</reference>
<reference evidence="40" key="14">
    <citation type="journal article" date="2014" name="PLoS ONE">
        <title>Characterization of a Novel Plasmid Type and Various Genetic Contexts of bla OXA-58 in Acinetobacter spp. from Multiple Cities in China.</title>
        <authorList>
            <person name="Fu Y."/>
            <person name="Jiang J."/>
            <person name="Zhou H."/>
            <person name="Jiang Y."/>
            <person name="Fu Y."/>
            <person name="Yu Y."/>
            <person name="Zhou J."/>
        </authorList>
    </citation>
    <scope>NUCLEOTIDE SEQUENCE [GENOMIC DNA]</scope>
    <source>
        <strain evidence="40">WA3</strain>
        <strain evidence="41">WH8144</strain>
        <plasmid evidence="40">pWA3</plasmid>
        <plasmid evidence="41">pWH8144</plasmid>
    </source>
</reference>
<reference evidence="46 49" key="15">
    <citation type="journal article" date="2017" name="Ann. Clin. Microbiol. Antimicrob.">
        <title>New eight genes identified at the clinical multidrug-resistant Acinetobacter baumannii DMS06669 strain in a Vietnam hospital.</title>
        <authorList>
            <person name="Si-Tuan N."/>
            <person name="Ngoc H.M."/>
            <person name="Hang P.T.T."/>
            <person name="Nguyen C."/>
            <person name="Van P.H."/>
            <person name="Huong N.T."/>
        </authorList>
    </citation>
    <scope>NUCLEOTIDE SEQUENCE [LARGE SCALE GENOMIC DNA]</scope>
    <source>
        <strain evidence="46 49">DMS06669</strain>
    </source>
</reference>
<reference evidence="43" key="16">
    <citation type="submission" date="2017-02" db="EMBL/GenBank/DDBJ databases">
        <title>Overexpression of blaOXA-58 gene is associated with imipenem resistance in Vietnamese isolates of Acinetobacter baumannii.</title>
        <authorList>
            <person name="Nguyen T.A."/>
        </authorList>
    </citation>
    <scope>NUCLEOTIDE SEQUENCE [GENOMIC DNA]</scope>
    <source>
        <strain evidence="43">DN050</strain>
    </source>
</reference>
<reference evidence="48" key="17">
    <citation type="submission" date="2018-12" db="EMBL/GenBank/DDBJ databases">
        <title>Na.</title>
        <authorList>
            <person name="Fouts D.E."/>
            <person name="Sutton G."/>
            <person name="Singh I."/>
            <person name="Nguyen K."/>
        </authorList>
    </citation>
    <scope>NUCLEOTIDE SEQUENCE [LARGE SCALE GENOMIC DNA]</scope>
    <source>
        <strain evidence="48">AM107</strain>
    </source>
</reference>
<reference evidence="46" key="18">
    <citation type="submission" date="2019-12" db="EMBL/GenBank/DDBJ databases">
        <authorList>
            <person name="Nguyen S.-T."/>
        </authorList>
    </citation>
    <scope>NUCLEOTIDE SEQUENCE [GENOMIC DNA]</scope>
    <source>
        <strain evidence="46">DMS06669</strain>
    </source>
</reference>
<reference evidence="47" key="19">
    <citation type="journal article" date="2021" name="MSphere">
        <title>Complete Genome Sequencing of Acinetobacter baumannii AC1633 and Acinetobacter nosocomialis AC1530 Unveils a Large Multidrug-Resistant Plasmid Encoding the NDM-1 and OXA-58 Carbapenemases.</title>
        <authorList>
            <person name="Alattraqchi A.G."/>
            <person name="Mohd Rani F."/>
            <person name="Rahman N.I.A."/>
            <person name="Ismail S."/>
            <person name="Cleary D.W."/>
            <person name="Clarke S.C."/>
            <person name="Yeo C.C."/>
        </authorList>
    </citation>
    <scope>NUCLEOTIDE SEQUENCE [LARGE SCALE GENOMIC DNA]</scope>
    <source>
        <strain evidence="47">AC1633</strain>
        <plasmid evidence="47">pAC1633-1</plasmid>
    </source>
</reference>
<reference evidence="45 50" key="20">
    <citation type="journal article" date="2023" name="Nat. Commun.">
        <title>Genomic dissection of endemic carbapenem resistance reveals metallo-beta-lactamase dissemination through clonal, plasmid and integron transfer.</title>
        <authorList>
            <person name="Macesic N."/>
            <person name="Hawkey J."/>
            <person name="Vezina B."/>
            <person name="Wisniewski J.A."/>
            <person name="Cottingham H."/>
            <person name="Blakeway L.V."/>
            <person name="Harshegyi T."/>
            <person name="Pragastis K."/>
            <person name="Badoordeen G.Z."/>
            <person name="Dennison A."/>
            <person name="Spelman D.W."/>
            <person name="Jenney A.W.J."/>
            <person name="Peleg A.Y."/>
        </authorList>
    </citation>
    <scope>NUCLEOTIDE SEQUENCE [LARGE SCALE GENOMIC DNA]</scope>
    <source>
        <strain evidence="45 50">CPO519</strain>
    </source>
</reference>
<reference evidence="44" key="21">
    <citation type="submission" date="2023-01" db="EMBL/GenBank/DDBJ databases">
        <title>Genomic dissection of endemic carbapenem resistance: metallo-beta-lactamase gene dissemination through clonal, plasmid and integron transfer pathways.</title>
        <authorList>
            <person name="Macesic N."/>
        </authorList>
    </citation>
    <scope>NUCLEOTIDE SEQUENCE [GENOMIC DNA]</scope>
    <source>
        <strain evidence="44">CPO519</strain>
    </source>
</reference>
<reference evidence="51" key="22">
    <citation type="journal article" date="2014" name="Antimicrob. Agents Chemother.">
        <title>Crystal structure of carbapenemase OXA-58 from Acinetobacter baumannii.</title>
        <authorList>
            <person name="Smith C.A."/>
            <person name="Antunes N.T."/>
            <person name="Toth M."/>
            <person name="Vakulenko S.B."/>
        </authorList>
    </citation>
    <scope>X-RAY CRYSTALLOGRAPHY (1.30 ANGSTROMS)</scope>
    <scope>CARBOXYLATION AT LYS-86</scope>
</reference>
<reference evidence="55" key="23">
    <citation type="journal article" date="2015" name="PLoS ONE">
        <title>Crystal Structure of OXA-58 with the Substrate-Binding Cleft in a Closed State: Insights into the Mobility and Stability of the OXA-58 Structure.</title>
        <authorList>
            <person name="Saino H."/>
            <person name="Sugiyabu T."/>
            <person name="Ueno G."/>
            <person name="Yamamoto M."/>
            <person name="Ishii Y."/>
            <person name="Miyano M."/>
        </authorList>
    </citation>
    <scope>X-RAY CRYSTALLOGRAPHY (1.80 ANGSTROMS) OF 44-280</scope>
    <scope>FUNCTION</scope>
    <scope>CATALYTIC ACTIVITY</scope>
    <scope>ACTIVITY REGULATION</scope>
    <scope>CARBOXYLATION AT LYS-86</scope>
    <scope>MUTAGENESIS OF SER-83 AND TRP-169</scope>
</reference>
<reference evidence="52 53 54" key="24">
    <citation type="journal article" date="2016" name="Antimicrob. Agents Chemother.">
        <title>Active-Site Plasticity Is Essential to Carbapenem Hydrolysis by OXA-58 Class D beta-Lactamase of Acinetobacter baumannii.</title>
        <authorList>
            <person name="Pratap S."/>
            <person name="Katiki M."/>
            <person name="Gill P."/>
            <person name="Kumar P."/>
            <person name="Golemi-Kotra D."/>
        </authorList>
    </citation>
    <scope>X-RAY CRYSTALLOGRAPHY (2.30 ANGSTROMS) IN APO FORM AND IN COMPLEXES WITH CARBAPENEM ANALOGS</scope>
    <scope>FUNCTION</scope>
    <scope>CATALYTIC ACTIVITY</scope>
    <scope>BIOPHYSICOCHEMICAL PROPERTIES</scope>
    <scope>CARBOXYLATION AT LYS-86</scope>
    <scope>MUTAGENESIS OF PHE-113; PHE-114 AND MET-225</scope>
</reference>
<reference evidence="56" key="25">
    <citation type="submission" date="2021-11" db="PDB data bank">
        <title>OXA-58 crystal structure of acylated meropenem complex.</title>
        <authorList>
            <person name="Saino H."/>
            <person name="Okimoto N."/>
            <person name="Otsuka T."/>
            <person name="Sugiyabu T."/>
            <person name="Sasaki I."/>
            <person name="Ueno G."/>
            <person name="Oouchi M."/>
            <person name="Yamamoto M."/>
            <person name="Ishii K."/>
            <person name="Taiji M."/>
            <person name="Miyano M."/>
        </authorList>
    </citation>
    <scope>X-RAY CRYSTALLOGRAPHY (1.40 ANGSTROMS) OF 44-280</scope>
</reference>
<reference evidence="57 58" key="26">
    <citation type="submission" date="2021-11" db="PDB data bank">
        <title>OXA-58 crystal structure of acylated meropenem complex 2.</title>
        <authorList>
            <person name="Saino H."/>
            <person name="Sugiyabu T."/>
            <person name="Miyano M."/>
        </authorList>
    </citation>
    <scope>X-RAY CRYSTALLOGRAPHY (1.70 ANGSTROMS)</scope>
</reference>
<evidence type="ECO:0000250" key="1">
    <source>
        <dbReference type="UniProtKB" id="P13661"/>
    </source>
</evidence>
<evidence type="ECO:0000250" key="2">
    <source>
        <dbReference type="UniProtKB" id="Q6XEC0"/>
    </source>
</evidence>
<evidence type="ECO:0000250" key="3">
    <source>
        <dbReference type="UniProtKB" id="Q8RLA6"/>
    </source>
</evidence>
<evidence type="ECO:0000250" key="4">
    <source>
        <dbReference type="UniProtKB" id="Q9L4P2"/>
    </source>
</evidence>
<evidence type="ECO:0000255" key="5">
    <source>
        <dbReference type="PIRSR" id="PIRSR602137-50"/>
    </source>
</evidence>
<evidence type="ECO:0000255" key="6">
    <source>
        <dbReference type="PROSITE-ProRule" id="PRU00303"/>
    </source>
</evidence>
<evidence type="ECO:0000255" key="7">
    <source>
        <dbReference type="RuleBase" id="RU361140"/>
    </source>
</evidence>
<evidence type="ECO:0000269" key="8">
    <source>
    </source>
</evidence>
<evidence type="ECO:0000269" key="9">
    <source>
    </source>
</evidence>
<evidence type="ECO:0000269" key="10">
    <source>
    </source>
</evidence>
<evidence type="ECO:0000269" key="11">
    <source>
    </source>
</evidence>
<evidence type="ECO:0000269" key="12">
    <source>
    </source>
</evidence>
<evidence type="ECO:0000269" key="13">
    <source>
    </source>
</evidence>
<evidence type="ECO:0000303" key="14">
    <source>
    </source>
</evidence>
<evidence type="ECO:0000305" key="15"/>
<evidence type="ECO:0000312" key="16">
    <source>
        <dbReference type="EMBL" id="AAW57529.1"/>
    </source>
</evidence>
<evidence type="ECO:0000312" key="17">
    <source>
        <dbReference type="EMBL" id="ABD47674.1"/>
    </source>
</evidence>
<evidence type="ECO:0000312" key="18">
    <source>
        <dbReference type="EMBL" id="ABJ91191.1"/>
    </source>
</evidence>
<evidence type="ECO:0000312" key="19">
    <source>
        <dbReference type="EMBL" id="ABQ23503.1"/>
    </source>
</evidence>
<evidence type="ECO:0000312" key="20">
    <source>
        <dbReference type="EMBL" id="ABQ23512.2"/>
    </source>
</evidence>
<evidence type="ECO:0000312" key="21">
    <source>
        <dbReference type="EMBL" id="ABU97485.1"/>
    </source>
</evidence>
<evidence type="ECO:0000312" key="22">
    <source>
        <dbReference type="EMBL" id="ABU97486.1"/>
    </source>
</evidence>
<evidence type="ECO:0000312" key="23">
    <source>
        <dbReference type="EMBL" id="ABU97487.1"/>
    </source>
</evidence>
<evidence type="ECO:0000312" key="24">
    <source>
        <dbReference type="EMBL" id="ABU97488.1"/>
    </source>
</evidence>
<evidence type="ECO:0000312" key="25">
    <source>
        <dbReference type="EMBL" id="ABU97489.1"/>
    </source>
</evidence>
<evidence type="ECO:0000312" key="26">
    <source>
        <dbReference type="EMBL" id="ABU97490.1"/>
    </source>
</evidence>
<evidence type="ECO:0000312" key="27">
    <source>
        <dbReference type="EMBL" id="ABU97491.1"/>
    </source>
</evidence>
<evidence type="ECO:0000312" key="28">
    <source>
        <dbReference type="EMBL" id="ABU97492.1"/>
    </source>
</evidence>
<evidence type="ECO:0000312" key="29">
    <source>
        <dbReference type="EMBL" id="ABU97493.1"/>
    </source>
</evidence>
<evidence type="ECO:0000312" key="30">
    <source>
        <dbReference type="EMBL" id="ABU97494.1"/>
    </source>
</evidence>
<evidence type="ECO:0000312" key="31">
    <source>
        <dbReference type="EMBL" id="ABU97495.1"/>
    </source>
</evidence>
<evidence type="ECO:0000312" key="32">
    <source>
        <dbReference type="EMBL" id="ABU97496.1"/>
    </source>
</evidence>
<evidence type="ECO:0000312" key="33">
    <source>
        <dbReference type="EMBL" id="ABU97497.1"/>
    </source>
</evidence>
<evidence type="ECO:0000312" key="34">
    <source>
        <dbReference type="EMBL" id="ACB05799.1"/>
    </source>
</evidence>
<evidence type="ECO:0000312" key="35">
    <source>
        <dbReference type="EMBL" id="ACL27893.1"/>
    </source>
</evidence>
<evidence type="ECO:0000312" key="36">
    <source>
        <dbReference type="EMBL" id="ACT98250.1"/>
    </source>
</evidence>
<evidence type="ECO:0000312" key="37">
    <source>
        <dbReference type="EMBL" id="ACT98258.1"/>
    </source>
</evidence>
<evidence type="ECO:0000312" key="38">
    <source>
        <dbReference type="EMBL" id="ADM33943.1"/>
    </source>
</evidence>
<evidence type="ECO:0000312" key="39">
    <source>
        <dbReference type="EMBL" id="ADQ27319.1"/>
    </source>
</evidence>
<evidence type="ECO:0000312" key="40">
    <source>
        <dbReference type="EMBL" id="AFF18250.1"/>
    </source>
</evidence>
<evidence type="ECO:0000312" key="41">
    <source>
        <dbReference type="EMBL" id="AFH57370.1"/>
    </source>
</evidence>
<evidence type="ECO:0000312" key="42">
    <source>
        <dbReference type="EMBL" id="AGC51039.1"/>
    </source>
</evidence>
<evidence type="ECO:0000312" key="43">
    <source>
        <dbReference type="EMBL" id="ASF83214.1"/>
    </source>
</evidence>
<evidence type="ECO:0000312" key="44">
    <source>
        <dbReference type="EMBL" id="MDK4883960.1"/>
    </source>
</evidence>
<evidence type="ECO:0000312" key="45">
    <source>
        <dbReference type="EMBL" id="MEC5498499.1"/>
    </source>
</evidence>
<evidence type="ECO:0000312" key="46">
    <source>
        <dbReference type="EMBL" id="MYM80302.1"/>
    </source>
</evidence>
<evidence type="ECO:0000312" key="47">
    <source>
        <dbReference type="EMBL" id="QOJ62286.1"/>
    </source>
</evidence>
<evidence type="ECO:0000312" key="48">
    <source>
        <dbReference type="EMBL" id="RTY12892.1"/>
    </source>
</evidence>
<evidence type="ECO:0000312" key="49">
    <source>
        <dbReference type="Proteomes" id="UP000480763"/>
    </source>
</evidence>
<evidence type="ECO:0000312" key="50">
    <source>
        <dbReference type="Proteomes" id="UP001174156"/>
    </source>
</evidence>
<evidence type="ECO:0007744" key="51">
    <source>
        <dbReference type="PDB" id="4OH0"/>
    </source>
</evidence>
<evidence type="ECO:0007744" key="52">
    <source>
        <dbReference type="PDB" id="4Y0O"/>
    </source>
</evidence>
<evidence type="ECO:0007744" key="53">
    <source>
        <dbReference type="PDB" id="4Y0T"/>
    </source>
</evidence>
<evidence type="ECO:0007744" key="54">
    <source>
        <dbReference type="PDB" id="4Y0U"/>
    </source>
</evidence>
<evidence type="ECO:0007744" key="55">
    <source>
        <dbReference type="PDB" id="5BOH"/>
    </source>
</evidence>
<evidence type="ECO:0007744" key="56">
    <source>
        <dbReference type="PDB" id="7VVI"/>
    </source>
</evidence>
<evidence type="ECO:0007744" key="57">
    <source>
        <dbReference type="PDB" id="7VX3"/>
    </source>
</evidence>
<evidence type="ECO:0007744" key="58">
    <source>
        <dbReference type="PDB" id="7VX6"/>
    </source>
</evidence>
<evidence type="ECO:0007829" key="59">
    <source>
        <dbReference type="PDB" id="4OH0"/>
    </source>
</evidence>
<evidence type="ECO:0007829" key="60">
    <source>
        <dbReference type="PDB" id="9D8C"/>
    </source>
</evidence>
<name>OXA58_ACIBA</name>
<keyword id="KW-0002">3D-structure</keyword>
<keyword id="KW-0046">Antibiotic resistance</keyword>
<keyword id="KW-1003">Cell membrane</keyword>
<keyword id="KW-0378">Hydrolase</keyword>
<keyword id="KW-0449">Lipoprotein</keyword>
<keyword id="KW-0472">Membrane</keyword>
<keyword id="KW-0564">Palmitate</keyword>
<keyword id="KW-0614">Plasmid</keyword>
<keyword id="KW-0732">Signal</keyword>
<accession>Q2TR58</accession>
<accession>A5H882</accession>
<protein>
    <recommendedName>
        <fullName evidence="7 14">Beta-lactamase OXA-58</fullName>
        <ecNumber evidence="7 8 12 13">3.5.2.6</ecNumber>
    </recommendedName>
</protein>